<accession>C4ZCZ4</accession>
<feature type="chain" id="PRO_1000204922" description="Homoserine O-acetyltransferase">
    <location>
        <begin position="1"/>
        <end position="310"/>
    </location>
</feature>
<feature type="active site" description="Acyl-thioester intermediate" evidence="1">
    <location>
        <position position="142"/>
    </location>
</feature>
<feature type="active site" description="Proton acceptor" evidence="1">
    <location>
        <position position="235"/>
    </location>
</feature>
<feature type="active site" evidence="1">
    <location>
        <position position="237"/>
    </location>
</feature>
<feature type="binding site" evidence="1">
    <location>
        <position position="163"/>
    </location>
    <ligand>
        <name>substrate</name>
    </ligand>
</feature>
<feature type="binding site" evidence="1">
    <location>
        <position position="192"/>
    </location>
    <ligand>
        <name>substrate</name>
    </ligand>
</feature>
<feature type="binding site" evidence="1">
    <location>
        <position position="249"/>
    </location>
    <ligand>
        <name>substrate</name>
    </ligand>
</feature>
<feature type="site" description="Important for acyl-CoA specificity" evidence="1">
    <location>
        <position position="111"/>
    </location>
</feature>
<feature type="site" description="Important for substrate specificity" evidence="1">
    <location>
        <position position="192"/>
    </location>
</feature>
<protein>
    <recommendedName>
        <fullName evidence="1">Homoserine O-acetyltransferase</fullName>
        <shortName evidence="1">HAT</shortName>
        <ecNumber evidence="1">2.3.1.31</ecNumber>
    </recommendedName>
    <alternativeName>
        <fullName evidence="1">Homoserine transacetylase</fullName>
        <shortName evidence="1">HTA</shortName>
    </alternativeName>
</protein>
<dbReference type="EC" id="2.3.1.31" evidence="1"/>
<dbReference type="EMBL" id="CP001107">
    <property type="protein sequence ID" value="ACR75957.1"/>
    <property type="molecule type" value="Genomic_DNA"/>
</dbReference>
<dbReference type="SMR" id="C4ZCZ4"/>
<dbReference type="STRING" id="515619.EUBREC_2217"/>
<dbReference type="PaxDb" id="515619-EUBREC_2217"/>
<dbReference type="KEGG" id="ere:EUBREC_2217"/>
<dbReference type="HOGENOM" id="CLU_057851_0_1_9"/>
<dbReference type="UniPathway" id="UPA00051">
    <property type="reaction ID" value="UER00074"/>
</dbReference>
<dbReference type="Proteomes" id="UP000001477">
    <property type="component" value="Chromosome"/>
</dbReference>
<dbReference type="GO" id="GO:0005737">
    <property type="term" value="C:cytoplasm"/>
    <property type="evidence" value="ECO:0007669"/>
    <property type="project" value="UniProtKB-SubCell"/>
</dbReference>
<dbReference type="GO" id="GO:0004414">
    <property type="term" value="F:homoserine O-acetyltransferase activity"/>
    <property type="evidence" value="ECO:0007669"/>
    <property type="project" value="UniProtKB-EC"/>
</dbReference>
<dbReference type="GO" id="GO:0008899">
    <property type="term" value="F:homoserine O-succinyltransferase activity"/>
    <property type="evidence" value="ECO:0007669"/>
    <property type="project" value="UniProtKB-UniRule"/>
</dbReference>
<dbReference type="GO" id="GO:0019281">
    <property type="term" value="P:L-methionine biosynthetic process from homoserine via O-succinyl-L-homoserine and cystathionine"/>
    <property type="evidence" value="ECO:0007669"/>
    <property type="project" value="InterPro"/>
</dbReference>
<dbReference type="CDD" id="cd03131">
    <property type="entry name" value="GATase1_HTS"/>
    <property type="match status" value="1"/>
</dbReference>
<dbReference type="FunFam" id="3.40.50.880:FF:000004">
    <property type="entry name" value="Homoserine O-succinyltransferase"/>
    <property type="match status" value="1"/>
</dbReference>
<dbReference type="Gene3D" id="3.40.50.880">
    <property type="match status" value="1"/>
</dbReference>
<dbReference type="HAMAP" id="MF_00295">
    <property type="entry name" value="MetA_acyltransf"/>
    <property type="match status" value="1"/>
</dbReference>
<dbReference type="InterPro" id="IPR029062">
    <property type="entry name" value="Class_I_gatase-like"/>
</dbReference>
<dbReference type="InterPro" id="IPR005697">
    <property type="entry name" value="HST_MetA"/>
</dbReference>
<dbReference type="InterPro" id="IPR033752">
    <property type="entry name" value="MetA_family"/>
</dbReference>
<dbReference type="NCBIfam" id="TIGR01001">
    <property type="entry name" value="metA"/>
    <property type="match status" value="1"/>
</dbReference>
<dbReference type="PANTHER" id="PTHR20919">
    <property type="entry name" value="HOMOSERINE O-SUCCINYLTRANSFERASE"/>
    <property type="match status" value="1"/>
</dbReference>
<dbReference type="PANTHER" id="PTHR20919:SF0">
    <property type="entry name" value="HOMOSERINE O-SUCCINYLTRANSFERASE"/>
    <property type="match status" value="1"/>
</dbReference>
<dbReference type="Pfam" id="PF04204">
    <property type="entry name" value="HTS"/>
    <property type="match status" value="1"/>
</dbReference>
<dbReference type="PIRSF" id="PIRSF000450">
    <property type="entry name" value="H_ser_succinyltr"/>
    <property type="match status" value="1"/>
</dbReference>
<dbReference type="SUPFAM" id="SSF52317">
    <property type="entry name" value="Class I glutamine amidotransferase-like"/>
    <property type="match status" value="1"/>
</dbReference>
<organism>
    <name type="scientific">Agathobacter rectalis (strain ATCC 33656 / DSM 3377 / JCM 17463 / KCTC 5835 / VPI 0990)</name>
    <name type="common">Eubacterium rectale</name>
    <dbReference type="NCBI Taxonomy" id="515619"/>
    <lineage>
        <taxon>Bacteria</taxon>
        <taxon>Bacillati</taxon>
        <taxon>Bacillota</taxon>
        <taxon>Clostridia</taxon>
        <taxon>Lachnospirales</taxon>
        <taxon>Lachnospiraceae</taxon>
        <taxon>Agathobacter</taxon>
    </lineage>
</organism>
<gene>
    <name evidence="1" type="primary">metAA</name>
    <name type="ordered locus">EUBREC_2217</name>
</gene>
<evidence type="ECO:0000255" key="1">
    <source>
        <dbReference type="HAMAP-Rule" id="MF_00295"/>
    </source>
</evidence>
<sequence>MPIKTQNDLPVKEILERENIFVMDENRASHQNIRQLEIAIVNLMPLKEDTELQILRSLSNTPIQVNVTFVTTSTHEATHTSLSHLNKFYETFDDIKDRYFDGMIITGAPVELMEYEEVDYWDEICSIMEWSKTHAFSTLHLCWGAQAGLYYHYGIPKRVLPKKKFGVYAHRVKNRKIPLVRGFDDVFYAPHSRHTEVLKEDILKHPELTILAESDDAGVFLLMDQDGKKIFVMGHPEYDRYTLHNEYERDKKKGLDIDMPVNYYPDNDDTQKPLLQWRSHGNILYSNWLNYYVYQEVPYEFINNREIIGK</sequence>
<proteinExistence type="inferred from homology"/>
<keyword id="KW-0012">Acyltransferase</keyword>
<keyword id="KW-0028">Amino-acid biosynthesis</keyword>
<keyword id="KW-0963">Cytoplasm</keyword>
<keyword id="KW-0486">Methionine biosynthesis</keyword>
<keyword id="KW-0808">Transferase</keyword>
<name>METAA_AGARV</name>
<reference key="1">
    <citation type="journal article" date="2009" name="Proc. Natl. Acad. Sci. U.S.A.">
        <title>Characterizing a model human gut microbiota composed of members of its two dominant bacterial phyla.</title>
        <authorList>
            <person name="Mahowald M.A."/>
            <person name="Rey F.E."/>
            <person name="Seedorf H."/>
            <person name="Turnbaugh P.J."/>
            <person name="Fulton R.S."/>
            <person name="Wollam A."/>
            <person name="Shah N."/>
            <person name="Wang C."/>
            <person name="Magrini V."/>
            <person name="Wilson R.K."/>
            <person name="Cantarel B.L."/>
            <person name="Coutinho P.M."/>
            <person name="Henrissat B."/>
            <person name="Crock L.W."/>
            <person name="Russell A."/>
            <person name="Verberkmoes N.C."/>
            <person name="Hettich R.L."/>
            <person name="Gordon J.I."/>
        </authorList>
    </citation>
    <scope>NUCLEOTIDE SEQUENCE [LARGE SCALE GENOMIC DNA]</scope>
    <source>
        <strain>ATCC 33656 / DSM 3377 / JCM 17463 / KCTC 5835 / LMG 30912 / VPI 0990</strain>
    </source>
</reference>
<comment type="function">
    <text evidence="1">Transfers an acetyl group from acetyl-CoA to L-homoserine, forming acetyl-L-homoserine.</text>
</comment>
<comment type="catalytic activity">
    <reaction evidence="1">
        <text>L-homoserine + acetyl-CoA = O-acetyl-L-homoserine + CoA</text>
        <dbReference type="Rhea" id="RHEA:13701"/>
        <dbReference type="ChEBI" id="CHEBI:57287"/>
        <dbReference type="ChEBI" id="CHEBI:57288"/>
        <dbReference type="ChEBI" id="CHEBI:57476"/>
        <dbReference type="ChEBI" id="CHEBI:57716"/>
        <dbReference type="EC" id="2.3.1.31"/>
    </reaction>
</comment>
<comment type="pathway">
    <text evidence="1">Amino-acid biosynthesis; L-methionine biosynthesis via de novo pathway; O-acetyl-L-homoserine from L-homoserine: step 1/1.</text>
</comment>
<comment type="subcellular location">
    <subcellularLocation>
        <location evidence="1">Cytoplasm</location>
    </subcellularLocation>
</comment>
<comment type="similarity">
    <text evidence="1">Belongs to the MetA family.</text>
</comment>